<reference key="1">
    <citation type="journal article" date="1983" name="Cell">
        <title>Analysis of a yeast nuclear gene involved in the maturation of mitochondrial pre-messenger RNA of the cytochrome oxidase subunit I.</title>
        <authorList>
            <person name="Faye G."/>
            <person name="Simon M."/>
        </authorList>
    </citation>
    <scope>NUCLEOTIDE SEQUENCE [GENOMIC DNA]</scope>
    <source>
        <strain>ATCC 204510 / AB320</strain>
    </source>
</reference>
<reference key="2">
    <citation type="journal article" date="1992" name="Yeast">
        <title>Analysis of the MSS51 region on chromosome XII of Saccharomyces cerevisiae.</title>
        <authorList>
            <person name="Simon M."/>
            <person name="della Seta F."/>
            <person name="Sor F."/>
            <person name="Faye G."/>
        </authorList>
    </citation>
    <scope>NUCLEOTIDE SEQUENCE [GENOMIC DNA]</scope>
    <source>
        <strain>D273-10B/A</strain>
    </source>
</reference>
<reference key="3">
    <citation type="journal article" date="1997" name="Nature">
        <title>The nucleotide sequence of Saccharomyces cerevisiae chromosome XII.</title>
        <authorList>
            <person name="Johnston M."/>
            <person name="Hillier L.W."/>
            <person name="Riles L."/>
            <person name="Albermann K."/>
            <person name="Andre B."/>
            <person name="Ansorge W."/>
            <person name="Benes V."/>
            <person name="Brueckner M."/>
            <person name="Delius H."/>
            <person name="Dubois E."/>
            <person name="Duesterhoeft A."/>
            <person name="Entian K.-D."/>
            <person name="Floeth M."/>
            <person name="Goffeau A."/>
            <person name="Hebling U."/>
            <person name="Heumann K."/>
            <person name="Heuss-Neitzel D."/>
            <person name="Hilbert H."/>
            <person name="Hilger F."/>
            <person name="Kleine K."/>
            <person name="Koetter P."/>
            <person name="Louis E.J."/>
            <person name="Messenguy F."/>
            <person name="Mewes H.-W."/>
            <person name="Miosga T."/>
            <person name="Moestl D."/>
            <person name="Mueller-Auer S."/>
            <person name="Nentwich U."/>
            <person name="Obermaier B."/>
            <person name="Piravandi E."/>
            <person name="Pohl T.M."/>
            <person name="Portetelle D."/>
            <person name="Purnelle B."/>
            <person name="Rechmann S."/>
            <person name="Rieger M."/>
            <person name="Rinke M."/>
            <person name="Rose M."/>
            <person name="Scharfe M."/>
            <person name="Scherens B."/>
            <person name="Scholler P."/>
            <person name="Schwager C."/>
            <person name="Schwarz S."/>
            <person name="Underwood A.P."/>
            <person name="Urrestarazu L.A."/>
            <person name="Vandenbol M."/>
            <person name="Verhasselt P."/>
            <person name="Vierendeels F."/>
            <person name="Voet M."/>
            <person name="Volckaert G."/>
            <person name="Voss H."/>
            <person name="Wambutt R."/>
            <person name="Wedler E."/>
            <person name="Wedler H."/>
            <person name="Zimmermann F.K."/>
            <person name="Zollner A."/>
            <person name="Hani J."/>
            <person name="Hoheisel J.D."/>
        </authorList>
    </citation>
    <scope>NUCLEOTIDE SEQUENCE [LARGE SCALE GENOMIC DNA]</scope>
    <source>
        <strain>ATCC 204508 / S288c</strain>
    </source>
</reference>
<reference key="4">
    <citation type="journal article" date="2014" name="G3 (Bethesda)">
        <title>The reference genome sequence of Saccharomyces cerevisiae: Then and now.</title>
        <authorList>
            <person name="Engel S.R."/>
            <person name="Dietrich F.S."/>
            <person name="Fisk D.G."/>
            <person name="Binkley G."/>
            <person name="Balakrishnan R."/>
            <person name="Costanzo M.C."/>
            <person name="Dwight S.S."/>
            <person name="Hitz B.C."/>
            <person name="Karra K."/>
            <person name="Nash R.S."/>
            <person name="Weng S."/>
            <person name="Wong E.D."/>
            <person name="Lloyd P."/>
            <person name="Skrzypek M.S."/>
            <person name="Miyasato S.R."/>
            <person name="Simison M."/>
            <person name="Cherry J.M."/>
        </authorList>
    </citation>
    <scope>GENOME REANNOTATION</scope>
    <source>
        <strain>ATCC 204508 / S288c</strain>
    </source>
</reference>
<reference key="5">
    <citation type="journal article" date="1984" name="Proc. Natl. Acad. Sci. U.S.A.">
        <title>Steps in processing of the mitochondrial cytochrome oxidase subunit I pre-mRNA affected by a nuclear mutation in yeast.</title>
        <authorList>
            <person name="Simon M."/>
            <person name="Faye G."/>
        </authorList>
    </citation>
    <scope>FUNCTION</scope>
</reference>
<reference key="6">
    <citation type="journal article" date="1990" name="Mol. Gen. Genet.">
        <title>The MSS51 gene product is required for the translation of the COX1 mRNA in yeast mitochondria.</title>
        <authorList>
            <person name="Decoster E."/>
            <person name="Simon M."/>
            <person name="Hatat D."/>
            <person name="Faye G."/>
        </authorList>
    </citation>
    <scope>CHARACTERIZATION</scope>
</reference>
<reference key="7">
    <citation type="journal article" date="2000" name="Curr. Genet.">
        <title>Mss51p, a putative translational activator of cytochrome c oxidase subunit-1 (COX1) mRNA, is required for synthesis of Cox1p in Saccharomyces cerevisiae.</title>
        <authorList>
            <person name="Siep M."/>
            <person name="van Oosterum K."/>
            <person name="Neufeglise H."/>
            <person name="van der Spek H."/>
            <person name="Grivell L.A."/>
        </authorList>
    </citation>
    <scope>FUNCTION IN TRANSLATION REGULATION</scope>
    <scope>SUBCELLULAR LOCATION</scope>
</reference>
<reference key="8">
    <citation type="journal article" date="2002" name="EMBO J.">
        <title>Shy1p is necessary for full expression of mitochondrial COX1 in the yeast model of Leigh's syndrome.</title>
        <authorList>
            <person name="Barrientos A."/>
            <person name="Korr D."/>
            <person name="Tzagoloff A."/>
        </authorList>
    </citation>
    <scope>MUTAGENESIS OF THR-167 AND PHE-199</scope>
</reference>
<reference key="9">
    <citation type="journal article" date="2003" name="EMBO J.">
        <title>Mss51p promotes mitochondrial Cox1p synthesis and interacts with newly synthesized Cox1p.</title>
        <authorList>
            <person name="Perez-Martinez X."/>
            <person name="Broadley S.A."/>
            <person name="Fox T.D."/>
        </authorList>
    </citation>
    <scope>FUNCTION</scope>
    <scope>INTERACTION WITH COX1</scope>
</reference>
<reference key="10">
    <citation type="journal article" date="2003" name="Nature">
        <title>Global analysis of protein localization in budding yeast.</title>
        <authorList>
            <person name="Huh W.-K."/>
            <person name="Falvo J.V."/>
            <person name="Gerke L.C."/>
            <person name="Carroll A.S."/>
            <person name="Howson R.W."/>
            <person name="Weissman J.S."/>
            <person name="O'Shea E.K."/>
        </authorList>
    </citation>
    <scope>SUBCELLULAR LOCATION [LARGE SCALE ANALYSIS]</scope>
</reference>
<reference key="11">
    <citation type="journal article" date="2003" name="Nature">
        <title>Global analysis of protein expression in yeast.</title>
        <authorList>
            <person name="Ghaemmaghami S."/>
            <person name="Huh W.-K."/>
            <person name="Bower K."/>
            <person name="Howson R.W."/>
            <person name="Belle A."/>
            <person name="Dephoure N."/>
            <person name="O'Shea E.K."/>
            <person name="Weissman J.S."/>
        </authorList>
    </citation>
    <scope>LEVEL OF PROTEIN EXPRESSION [LARGE SCALE ANALYSIS]</scope>
</reference>
<reference key="12">
    <citation type="journal article" date="2003" name="Proc. Natl. Acad. Sci. U.S.A.">
        <title>The proteome of Saccharomyces cerevisiae mitochondria.</title>
        <authorList>
            <person name="Sickmann A."/>
            <person name="Reinders J."/>
            <person name="Wagner Y."/>
            <person name="Joppich C."/>
            <person name="Zahedi R.P."/>
            <person name="Meyer H.E."/>
            <person name="Schoenfisch B."/>
            <person name="Perschil I."/>
            <person name="Chacinska A."/>
            <person name="Guiard B."/>
            <person name="Rehling P."/>
            <person name="Pfanner N."/>
            <person name="Meisinger C."/>
        </authorList>
    </citation>
    <scope>SUBCELLULAR LOCATION [LARGE SCALE ANALYSIS]</scope>
    <source>
        <strain>ATCC 76625 / YPH499</strain>
    </source>
</reference>
<reference key="13">
    <citation type="journal article" date="2004" name="EMBO J.">
        <title>Mss51p and Cox14p jointly regulate mitochondrial Cox1p expression in Saccharomyces cerevisiae.</title>
        <authorList>
            <person name="Barrientos A."/>
            <person name="Zambrano A."/>
            <person name="Tzagoloff A."/>
        </authorList>
    </citation>
    <scope>FUNCTION</scope>
    <scope>SUBCELLULAR LOCATION</scope>
    <scope>INTERACTION WITH COX1 AND COX14</scope>
</reference>
<dbReference type="EMBL" id="J01487">
    <property type="protein sequence ID" value="AAA66926.1"/>
    <property type="molecule type" value="Genomic_DNA"/>
</dbReference>
<dbReference type="EMBL" id="S43721">
    <property type="protein sequence ID" value="AAB23218.1"/>
    <property type="molecule type" value="Genomic_DNA"/>
</dbReference>
<dbReference type="EMBL" id="U14913">
    <property type="protein sequence ID" value="AAB67438.1"/>
    <property type="molecule type" value="Genomic_DNA"/>
</dbReference>
<dbReference type="EMBL" id="BK006945">
    <property type="protein sequence ID" value="DAA09520.1"/>
    <property type="molecule type" value="Genomic_DNA"/>
</dbReference>
<dbReference type="PIR" id="S48554">
    <property type="entry name" value="S42160"/>
</dbReference>
<dbReference type="RefSeq" id="NP_013304.1">
    <property type="nucleotide sequence ID" value="NM_001182090.1"/>
</dbReference>
<dbReference type="BioGRID" id="31471">
    <property type="interactions" value="152"/>
</dbReference>
<dbReference type="ComplexPortal" id="CPX-1423">
    <property type="entry name" value="COX1 pre-assembly complex"/>
</dbReference>
<dbReference type="DIP" id="DIP-4602N"/>
<dbReference type="FunCoup" id="P32335">
    <property type="interactions" value="220"/>
</dbReference>
<dbReference type="IntAct" id="P32335">
    <property type="interactions" value="10"/>
</dbReference>
<dbReference type="MINT" id="P32335"/>
<dbReference type="STRING" id="4932.YLR203C"/>
<dbReference type="GlyGen" id="P32335">
    <property type="glycosylation" value="1 site"/>
</dbReference>
<dbReference type="iPTMnet" id="P32335"/>
<dbReference type="PaxDb" id="4932-YLR203C"/>
<dbReference type="PeptideAtlas" id="P32335"/>
<dbReference type="DNASU" id="850900"/>
<dbReference type="EnsemblFungi" id="YLR203C_mRNA">
    <property type="protein sequence ID" value="YLR203C"/>
    <property type="gene ID" value="YLR203C"/>
</dbReference>
<dbReference type="GeneID" id="850900"/>
<dbReference type="KEGG" id="sce:YLR203C"/>
<dbReference type="AGR" id="SGD:S000004193"/>
<dbReference type="SGD" id="S000004193">
    <property type="gene designation" value="MSS51"/>
</dbReference>
<dbReference type="VEuPathDB" id="FungiDB:YLR203C"/>
<dbReference type="eggNOG" id="ENOG502QQBW">
    <property type="taxonomic scope" value="Eukaryota"/>
</dbReference>
<dbReference type="HOGENOM" id="CLU_033072_0_0_1"/>
<dbReference type="InParanoid" id="P32335"/>
<dbReference type="OMA" id="CSEEHWA"/>
<dbReference type="OrthoDB" id="5282002at2759"/>
<dbReference type="BioCyc" id="YEAST:G3O-32322-MONOMER"/>
<dbReference type="BioGRID-ORCS" id="850900">
    <property type="hits" value="5 hits in 10 CRISPR screens"/>
</dbReference>
<dbReference type="PRO" id="PR:P32335"/>
<dbReference type="Proteomes" id="UP000002311">
    <property type="component" value="Chromosome XII"/>
</dbReference>
<dbReference type="RNAct" id="P32335">
    <property type="molecule type" value="protein"/>
</dbReference>
<dbReference type="GO" id="GO:0005743">
    <property type="term" value="C:mitochondrial inner membrane"/>
    <property type="evidence" value="ECO:0000303"/>
    <property type="project" value="ComplexPortal"/>
</dbReference>
<dbReference type="GO" id="GO:0005739">
    <property type="term" value="C:mitochondrion"/>
    <property type="evidence" value="ECO:0007005"/>
    <property type="project" value="SGD"/>
</dbReference>
<dbReference type="GO" id="GO:0045182">
    <property type="term" value="F:translation regulator activity"/>
    <property type="evidence" value="ECO:0000315"/>
    <property type="project" value="SGD"/>
</dbReference>
<dbReference type="GO" id="GO:0033617">
    <property type="term" value="P:mitochondrial cytochrome c oxidase assembly"/>
    <property type="evidence" value="ECO:0000315"/>
    <property type="project" value="SGD"/>
</dbReference>
<dbReference type="GO" id="GO:0006397">
    <property type="term" value="P:mRNA processing"/>
    <property type="evidence" value="ECO:0007669"/>
    <property type="project" value="UniProtKB-KW"/>
</dbReference>
<dbReference type="GO" id="GO:0070130">
    <property type="term" value="P:negative regulation of mitochondrial translation"/>
    <property type="evidence" value="ECO:0000303"/>
    <property type="project" value="ComplexPortal"/>
</dbReference>
<dbReference type="GO" id="GO:0070131">
    <property type="term" value="P:positive regulation of mitochondrial translation"/>
    <property type="evidence" value="ECO:0000315"/>
    <property type="project" value="SGD"/>
</dbReference>
<dbReference type="GO" id="GO:0050821">
    <property type="term" value="P:protein stabilization"/>
    <property type="evidence" value="ECO:0000303"/>
    <property type="project" value="ComplexPortal"/>
</dbReference>
<dbReference type="GO" id="GO:0008380">
    <property type="term" value="P:RNA splicing"/>
    <property type="evidence" value="ECO:0007669"/>
    <property type="project" value="UniProtKB-KW"/>
</dbReference>
<dbReference type="InterPro" id="IPR046824">
    <property type="entry name" value="Mss51-like_C"/>
</dbReference>
<dbReference type="InterPro" id="IPR032717">
    <property type="entry name" value="Mss51_Znf"/>
</dbReference>
<dbReference type="InterPro" id="IPR013272">
    <property type="entry name" value="Vps72/YL1_C"/>
</dbReference>
<dbReference type="PANTHER" id="PTHR28069">
    <property type="entry name" value="GH20023P"/>
    <property type="match status" value="1"/>
</dbReference>
<dbReference type="PANTHER" id="PTHR28069:SF1">
    <property type="entry name" value="PROTEIN MSS51, MITOCHONDRIAL"/>
    <property type="match status" value="1"/>
</dbReference>
<dbReference type="Pfam" id="PF20179">
    <property type="entry name" value="MSS51_C"/>
    <property type="match status" value="1"/>
</dbReference>
<dbReference type="Pfam" id="PF13824">
    <property type="entry name" value="zf-Mss51"/>
    <property type="match status" value="1"/>
</dbReference>
<dbReference type="SMART" id="SM00993">
    <property type="entry name" value="YL1_C"/>
    <property type="match status" value="1"/>
</dbReference>
<organism>
    <name type="scientific">Saccharomyces cerevisiae (strain ATCC 204508 / S288c)</name>
    <name type="common">Baker's yeast</name>
    <dbReference type="NCBI Taxonomy" id="559292"/>
    <lineage>
        <taxon>Eukaryota</taxon>
        <taxon>Fungi</taxon>
        <taxon>Dikarya</taxon>
        <taxon>Ascomycota</taxon>
        <taxon>Saccharomycotina</taxon>
        <taxon>Saccharomycetes</taxon>
        <taxon>Saccharomycetales</taxon>
        <taxon>Saccharomycetaceae</taxon>
        <taxon>Saccharomyces</taxon>
    </lineage>
</organism>
<protein>
    <recommendedName>
        <fullName>Protein MSS51, mitochondrial</fullName>
    </recommendedName>
    <alternativeName>
        <fullName>Mitochondrial splicing suppressor protein 51</fullName>
    </alternativeName>
</protein>
<evidence type="ECO:0000255" key="1"/>
<evidence type="ECO:0000256" key="2">
    <source>
        <dbReference type="SAM" id="MobiDB-lite"/>
    </source>
</evidence>
<evidence type="ECO:0000269" key="3">
    <source>
    </source>
</evidence>
<evidence type="ECO:0000269" key="4">
    <source>
    </source>
</evidence>
<evidence type="ECO:0000269" key="5">
    <source>
    </source>
</evidence>
<evidence type="ECO:0000269" key="6">
    <source>
    </source>
</evidence>
<evidence type="ECO:0000269" key="7">
    <source>
    </source>
</evidence>
<evidence type="ECO:0000269" key="8">
    <source>
    </source>
</evidence>
<evidence type="ECO:0000269" key="9">
    <source>
    </source>
</evidence>
<evidence type="ECO:0000269" key="10">
    <source>
    </source>
</evidence>
<evidence type="ECO:0000305" key="11"/>
<sequence>MTVLYAPSGATQLYFHLLRKSPHNRLVVSHQTRRHLMGFVRNALGLDPPPSPEDPTPENRFHPWDQSPSVDLRERAAKIRTLAHCPVTGKDINYTCPLSGIPTHHSREAWEMDKAYHDSKKYEILKKVNIYEHDLRSGRPFPEFDFPQQQGYDKAVNLTNWDLFFYTRSFYSMDTEFQLAAVTKMLSYPITIGSLLHKFSPYSLNPKGPITLEGLKSLAALRYTLYPLENRSLPTTTKNRAMRIFILGARAEAQLPGHVWKQLQFLFPEQSFEIHFIGPECLYKRDKQEYVKSTTPVVQRVDETLKFIYRTNFFEVFHEAQDFFPYDPYMDVFFTFHPGYASPESHGSWMGETMKALLETKCAIFTTGFNKKDLTDDINLVKSKYGKEMDVLMEPVRNVFGSTKWELNDMNPQEVYQFNMYIAGFRGKRYHTIKRQ</sequence>
<accession>P32335</accession>
<accession>D6VYK4</accession>
<comment type="function">
    <text evidence="3 8 9 10">Has a dual role in the assembly of cytochrome oxidase subunit 1 (COX1). It has a regulative function on COX1 synthesis, acting as a translational activator specific for the COX1 mRNA, and it also binds to newly synthesized COX1 protein. Together with COX14, may act as a chaperone that binds efficiently unassembled COX1 and prevents it from unproductive aggregation. When bound to COX1, MSS51 is unable to interact with the COX1 mRNA and translation is halted. This may be a feedback control that ensures that COX1 is only produced as long as potentially harmful assembly intermediates are not accumulating.</text>
</comment>
<comment type="subunit">
    <text evidence="8 9">Interacts with COX1 and COX14.</text>
</comment>
<comment type="interaction">
    <interactant intactId="EBI-11318">
        <id>P32335</id>
    </interactant>
    <interactant intactId="EBI-25287">
        <id>P40452</id>
        <label>COA1</label>
    </interactant>
    <organismsDiffer>false</organismsDiffer>
    <experiments>3</experiments>
</comment>
<comment type="interaction">
    <interactant intactId="EBI-11318">
        <id>P32335</id>
    </interactant>
    <interactant intactId="EBI-3680840">
        <id>Q3E7B2</id>
        <label>COA3</label>
    </interactant>
    <organismsDiffer>false</organismsDiffer>
    <experiments>4</experiments>
</comment>
<comment type="interaction">
    <interactant intactId="EBI-11318">
        <id>P32335</id>
    </interactant>
    <interactant intactId="EBI-5113">
        <id>P39103</id>
        <label>COX14</label>
    </interactant>
    <organismsDiffer>false</organismsDiffer>
    <experiments>3</experiments>
</comment>
<comment type="interaction">
    <interactant intactId="EBI-11318">
        <id>P32335</id>
    </interactant>
    <interactant intactId="EBI-8637">
        <id>P0CS90</id>
        <label>SSC1</label>
    </interactant>
    <organismsDiffer>false</organismsDiffer>
    <experiments>2</experiments>
</comment>
<comment type="subcellular location">
    <subcellularLocation>
        <location evidence="3 5 7 9">Mitochondrion inner membrane</location>
        <topology evidence="3 5 7 9">Peripheral membrane protein</topology>
        <orientation evidence="3 5 7 9">Matrix side</orientation>
    </subcellularLocation>
</comment>
<comment type="miscellaneous">
    <text evidence="6">Present with 4800 molecules/cell in log phase SD medium.</text>
</comment>
<comment type="similarity">
    <text evidence="11">Belongs to the MSS51 family.</text>
</comment>
<comment type="caution">
    <text evidence="11">Although no clear MSS51 ortholog is encoded in mammalian genomes, the mammalian MSS51/ZMYND17 protein of unknown function is significantly similar.</text>
</comment>
<gene>
    <name type="primary">MSS51</name>
    <name type="ordered locus">YLR203C</name>
    <name type="ORF">L8167.17</name>
</gene>
<keyword id="KW-0472">Membrane</keyword>
<keyword id="KW-0496">Mitochondrion</keyword>
<keyword id="KW-0999">Mitochondrion inner membrane</keyword>
<keyword id="KW-0507">mRNA processing</keyword>
<keyword id="KW-0508">mRNA splicing</keyword>
<keyword id="KW-1185">Reference proteome</keyword>
<keyword id="KW-0809">Transit peptide</keyword>
<feature type="transit peptide" description="Mitochondrion" evidence="1">
    <location>
        <begin position="1"/>
        <end position="26"/>
    </location>
</feature>
<feature type="chain" id="PRO_0000096603" description="Protein MSS51, mitochondrial">
    <location>
        <begin position="27"/>
        <end position="436"/>
    </location>
</feature>
<feature type="region of interest" description="Disordered" evidence="2">
    <location>
        <begin position="43"/>
        <end position="66"/>
    </location>
</feature>
<feature type="mutagenesis site" description="Partially suppresses the respiratory defect of SHY1 mutants by increasing COX1 translation." evidence="4">
    <original>T</original>
    <variation>R</variation>
    <location>
        <position position="167"/>
    </location>
</feature>
<feature type="mutagenesis site" description="Partially suppresses the respiratory defect of SHY1 mutants by increasing COX1 translation." evidence="4">
    <original>F</original>
    <variation>I</variation>
    <location>
        <position position="199"/>
    </location>
</feature>
<feature type="sequence conflict" description="In Ref. 1; AAA66926 and 2; AAB23218." evidence="11" ref="1 2">
    <original>I</original>
    <variation>M</variation>
    <location>
        <position position="210"/>
    </location>
</feature>
<proteinExistence type="evidence at protein level"/>
<name>MSS51_YEAST</name>